<name>RS4_STRP1</name>
<accession>P66567</accession>
<accession>Q48W26</accession>
<accession>Q99XJ4</accession>
<organism>
    <name type="scientific">Streptococcus pyogenes serotype M1</name>
    <dbReference type="NCBI Taxonomy" id="301447"/>
    <lineage>
        <taxon>Bacteria</taxon>
        <taxon>Bacillati</taxon>
        <taxon>Bacillota</taxon>
        <taxon>Bacilli</taxon>
        <taxon>Lactobacillales</taxon>
        <taxon>Streptococcaceae</taxon>
        <taxon>Streptococcus</taxon>
    </lineage>
</organism>
<dbReference type="EMBL" id="AE004092">
    <property type="protein sequence ID" value="AAK34809.1"/>
    <property type="molecule type" value="Genomic_DNA"/>
</dbReference>
<dbReference type="EMBL" id="CP000017">
    <property type="protein sequence ID" value="AAZ52449.1"/>
    <property type="molecule type" value="Genomic_DNA"/>
</dbReference>
<dbReference type="RefSeq" id="NP_270088.1">
    <property type="nucleotide sequence ID" value="NC_002737.2"/>
</dbReference>
<dbReference type="SMR" id="P66567"/>
<dbReference type="PaxDb" id="1314-HKU360_01943"/>
<dbReference type="KEGG" id="spy:SPy_2178"/>
<dbReference type="KEGG" id="spz:M5005_Spy1831"/>
<dbReference type="PATRIC" id="fig|160490.10.peg.1885"/>
<dbReference type="HOGENOM" id="CLU_092403_0_1_9"/>
<dbReference type="OMA" id="QLVVELY"/>
<dbReference type="PRO" id="PR:P66567"/>
<dbReference type="Proteomes" id="UP000000750">
    <property type="component" value="Chromosome"/>
</dbReference>
<dbReference type="GO" id="GO:0015935">
    <property type="term" value="C:small ribosomal subunit"/>
    <property type="evidence" value="ECO:0007669"/>
    <property type="project" value="InterPro"/>
</dbReference>
<dbReference type="GO" id="GO:0019843">
    <property type="term" value="F:rRNA binding"/>
    <property type="evidence" value="ECO:0007669"/>
    <property type="project" value="UniProtKB-UniRule"/>
</dbReference>
<dbReference type="GO" id="GO:0003735">
    <property type="term" value="F:structural constituent of ribosome"/>
    <property type="evidence" value="ECO:0007669"/>
    <property type="project" value="InterPro"/>
</dbReference>
<dbReference type="GO" id="GO:0042274">
    <property type="term" value="P:ribosomal small subunit biogenesis"/>
    <property type="evidence" value="ECO:0007669"/>
    <property type="project" value="TreeGrafter"/>
</dbReference>
<dbReference type="GO" id="GO:0006412">
    <property type="term" value="P:translation"/>
    <property type="evidence" value="ECO:0007669"/>
    <property type="project" value="UniProtKB-UniRule"/>
</dbReference>
<dbReference type="CDD" id="cd00165">
    <property type="entry name" value="S4"/>
    <property type="match status" value="1"/>
</dbReference>
<dbReference type="FunFam" id="1.10.1050.10:FF:000001">
    <property type="entry name" value="30S ribosomal protein S4"/>
    <property type="match status" value="1"/>
</dbReference>
<dbReference type="FunFam" id="3.10.290.10:FF:000001">
    <property type="entry name" value="30S ribosomal protein S4"/>
    <property type="match status" value="1"/>
</dbReference>
<dbReference type="Gene3D" id="1.10.1050.10">
    <property type="entry name" value="Ribosomal Protein S4 Delta 41, Chain A, domain 1"/>
    <property type="match status" value="1"/>
</dbReference>
<dbReference type="Gene3D" id="3.10.290.10">
    <property type="entry name" value="RNA-binding S4 domain"/>
    <property type="match status" value="1"/>
</dbReference>
<dbReference type="HAMAP" id="MF_01306_B">
    <property type="entry name" value="Ribosomal_uS4_B"/>
    <property type="match status" value="1"/>
</dbReference>
<dbReference type="InterPro" id="IPR022801">
    <property type="entry name" value="Ribosomal_uS4"/>
</dbReference>
<dbReference type="InterPro" id="IPR005709">
    <property type="entry name" value="Ribosomal_uS4_bac-type"/>
</dbReference>
<dbReference type="InterPro" id="IPR018079">
    <property type="entry name" value="Ribosomal_uS4_CS"/>
</dbReference>
<dbReference type="InterPro" id="IPR001912">
    <property type="entry name" value="Ribosomal_uS4_N"/>
</dbReference>
<dbReference type="InterPro" id="IPR002942">
    <property type="entry name" value="S4_RNA-bd"/>
</dbReference>
<dbReference type="InterPro" id="IPR036986">
    <property type="entry name" value="S4_RNA-bd_sf"/>
</dbReference>
<dbReference type="NCBIfam" id="NF003717">
    <property type="entry name" value="PRK05327.1"/>
    <property type="match status" value="1"/>
</dbReference>
<dbReference type="NCBIfam" id="TIGR01017">
    <property type="entry name" value="rpsD_bact"/>
    <property type="match status" value="1"/>
</dbReference>
<dbReference type="PANTHER" id="PTHR11831">
    <property type="entry name" value="30S 40S RIBOSOMAL PROTEIN"/>
    <property type="match status" value="1"/>
</dbReference>
<dbReference type="PANTHER" id="PTHR11831:SF4">
    <property type="entry name" value="SMALL RIBOSOMAL SUBUNIT PROTEIN US4M"/>
    <property type="match status" value="1"/>
</dbReference>
<dbReference type="Pfam" id="PF00163">
    <property type="entry name" value="Ribosomal_S4"/>
    <property type="match status" value="1"/>
</dbReference>
<dbReference type="Pfam" id="PF01479">
    <property type="entry name" value="S4"/>
    <property type="match status" value="1"/>
</dbReference>
<dbReference type="SMART" id="SM01390">
    <property type="entry name" value="Ribosomal_S4"/>
    <property type="match status" value="1"/>
</dbReference>
<dbReference type="SMART" id="SM00363">
    <property type="entry name" value="S4"/>
    <property type="match status" value="1"/>
</dbReference>
<dbReference type="SUPFAM" id="SSF55174">
    <property type="entry name" value="Alpha-L RNA-binding motif"/>
    <property type="match status" value="1"/>
</dbReference>
<dbReference type="PROSITE" id="PS00632">
    <property type="entry name" value="RIBOSOMAL_S4"/>
    <property type="match status" value="1"/>
</dbReference>
<dbReference type="PROSITE" id="PS50889">
    <property type="entry name" value="S4"/>
    <property type="match status" value="1"/>
</dbReference>
<evidence type="ECO:0000255" key="1">
    <source>
        <dbReference type="HAMAP-Rule" id="MF_01306"/>
    </source>
</evidence>
<evidence type="ECO:0000305" key="2"/>
<sequence>MSRYTGPSWKQSRRLGLSLTGTGKELARRNYVPGQHGPNNRSKLSEYGLQLAEKQKLRFSYGLGEKQFRNLFVQATKIKEGTLGFNFMVLLERRLDNVVYRLGLATTRRQARQFVNHGHILVDGKRVDIPSYRVDPGQVISVREKSMKVPAILEAVEATLGRPAFVSFDAEKLEGSLTRLPERDEINPEINEALVVEFYNKML</sequence>
<feature type="chain" id="PRO_0000132473" description="Small ribosomal subunit protein uS4">
    <location>
        <begin position="1"/>
        <end position="203"/>
    </location>
</feature>
<feature type="domain" description="S4 RNA-binding" evidence="1">
    <location>
        <begin position="93"/>
        <end position="156"/>
    </location>
</feature>
<keyword id="KW-1185">Reference proteome</keyword>
<keyword id="KW-0687">Ribonucleoprotein</keyword>
<keyword id="KW-0689">Ribosomal protein</keyword>
<keyword id="KW-0694">RNA-binding</keyword>
<keyword id="KW-0699">rRNA-binding</keyword>
<gene>
    <name evidence="1" type="primary">rpsD</name>
    <name type="ordered locus">SPy_2178</name>
    <name type="ordered locus">M5005_Spy1831</name>
</gene>
<protein>
    <recommendedName>
        <fullName evidence="1">Small ribosomal subunit protein uS4</fullName>
    </recommendedName>
    <alternativeName>
        <fullName evidence="2">30S ribosomal protein S4</fullName>
    </alternativeName>
</protein>
<reference key="1">
    <citation type="journal article" date="2001" name="Proc. Natl. Acad. Sci. U.S.A.">
        <title>Complete genome sequence of an M1 strain of Streptococcus pyogenes.</title>
        <authorList>
            <person name="Ferretti J.J."/>
            <person name="McShan W.M."/>
            <person name="Ajdic D.J."/>
            <person name="Savic D.J."/>
            <person name="Savic G."/>
            <person name="Lyon K."/>
            <person name="Primeaux C."/>
            <person name="Sezate S."/>
            <person name="Suvorov A.N."/>
            <person name="Kenton S."/>
            <person name="Lai H.S."/>
            <person name="Lin S.P."/>
            <person name="Qian Y."/>
            <person name="Jia H.G."/>
            <person name="Najar F.Z."/>
            <person name="Ren Q."/>
            <person name="Zhu H."/>
            <person name="Song L."/>
            <person name="White J."/>
            <person name="Yuan X."/>
            <person name="Clifton S.W."/>
            <person name="Roe B.A."/>
            <person name="McLaughlin R.E."/>
        </authorList>
    </citation>
    <scope>NUCLEOTIDE SEQUENCE [LARGE SCALE GENOMIC DNA]</scope>
    <source>
        <strain>ATCC 700294 / SF370 / Serotype M1</strain>
    </source>
</reference>
<reference key="2">
    <citation type="journal article" date="2005" name="J. Infect. Dis.">
        <title>Evolutionary origin and emergence of a highly successful clone of serotype M1 group A Streptococcus involved multiple horizontal gene transfer events.</title>
        <authorList>
            <person name="Sumby P."/>
            <person name="Porcella S.F."/>
            <person name="Madrigal A.G."/>
            <person name="Barbian K.D."/>
            <person name="Virtaneva K."/>
            <person name="Ricklefs S.M."/>
            <person name="Sturdevant D.E."/>
            <person name="Graham M.R."/>
            <person name="Vuopio-Varkila J."/>
            <person name="Hoe N.P."/>
            <person name="Musser J.M."/>
        </authorList>
    </citation>
    <scope>NUCLEOTIDE SEQUENCE [LARGE SCALE GENOMIC DNA]</scope>
    <source>
        <strain>ATCC BAA-947 / MGAS5005 / Serotype M1</strain>
    </source>
</reference>
<proteinExistence type="inferred from homology"/>
<comment type="function">
    <text evidence="1">One of the primary rRNA binding proteins, it binds directly to 16S rRNA where it nucleates assembly of the body of the 30S subunit.</text>
</comment>
<comment type="function">
    <text evidence="1">With S5 and S12 plays an important role in translational accuracy.</text>
</comment>
<comment type="subunit">
    <text evidence="1">Part of the 30S ribosomal subunit. Contacts protein S5. The interaction surface between S4 and S5 is involved in control of translational fidelity.</text>
</comment>
<comment type="similarity">
    <text evidence="1">Belongs to the universal ribosomal protein uS4 family.</text>
</comment>